<reference key="1">
    <citation type="journal article" date="1998" name="Gene">
        <title>Analysis of the murine Hoxa-9 cDNA: an alternatively spliced transcript encodes a truncated protein lacking the homeodomain.</title>
        <authorList>
            <person name="Fujimoto S."/>
            <person name="Araki K."/>
            <person name="Chisaka O."/>
            <person name="Araki M."/>
            <person name="Takagi K."/>
            <person name="Yamamura K."/>
        </authorList>
    </citation>
    <scope>NUCLEOTIDE SEQUENCE [MRNA] (ISOFORMS HOXA-9 AND HOXA-9T)</scope>
    <source>
        <strain>C57BL/6J</strain>
        <strain>ICR</strain>
    </source>
</reference>
<reference key="2">
    <citation type="journal article" date="2004" name="Genome Res.">
        <title>The status, quality, and expansion of the NIH full-length cDNA project: the Mammalian Gene Collection (MGC).</title>
        <authorList>
            <consortium name="The MGC Project Team"/>
        </authorList>
    </citation>
    <scope>NUCLEOTIDE SEQUENCE [LARGE SCALE MRNA] (ISOFORM HOXA-9)</scope>
    <source>
        <strain>FVB/N</strain>
        <tissue>Colon</tissue>
    </source>
</reference>
<reference key="3">
    <citation type="journal article" date="1987" name="Mol. Cell. Biol.">
        <title>Murine Hox-1.7 homeo-box gene: cloning, chromosomal location, and expression.</title>
        <authorList>
            <person name="Rubin M.R."/>
            <person name="King W."/>
            <person name="Toth L.E."/>
            <person name="Sawczuk I.S."/>
            <person name="Levine M.S."/>
            <person name="D'Eustachio P."/>
            <person name="Nguyen-Huu M.C."/>
        </authorList>
    </citation>
    <scope>NUCLEOTIDE SEQUENCE OF 180-271 (HOXA-9)</scope>
</reference>
<reference key="4">
    <citation type="journal article" date="1988" name="Mol. Cell. Biol.">
        <authorList>
            <person name="Rubin M.R."/>
            <person name="King W."/>
            <person name="Toth L.E."/>
            <person name="Sawczuk I.S."/>
            <person name="Levine M.S."/>
            <person name="D'Eustachio P."/>
            <person name="Nguyen-Huu M.C."/>
        </authorList>
    </citation>
    <scope>ERRATUM OF PUBMED:2891029</scope>
    <scope>SEQUENCE REVISION</scope>
</reference>
<reference key="5">
    <citation type="journal article" date="2005" name="Mol. Cell. Biol.">
        <title>Eukaryotic translation initiation factor 4E activity is modulated by HOXA9 at multiple levels.</title>
        <authorList>
            <person name="Topisirovic I."/>
            <person name="Kentsis A."/>
            <person name="Perez J.M."/>
            <person name="Guzman M.L."/>
            <person name="Jordan C.T."/>
            <person name="Borden K.L."/>
        </authorList>
    </citation>
    <scope>FUNCTION</scope>
    <scope>INTERACTION WITH EIF4E</scope>
    <scope>MUTAGENESIS OF TYR-11</scope>
</reference>
<name>HXA9_MOUSE</name>
<protein>
    <recommendedName>
        <fullName>Homeobox protein Hox-A9</fullName>
    </recommendedName>
    <alternativeName>
        <fullName>Homeobox protein Hox-1.7</fullName>
    </alternativeName>
</protein>
<evidence type="ECO:0000250" key="1"/>
<evidence type="ECO:0000250" key="2">
    <source>
        <dbReference type="UniProtKB" id="P31269"/>
    </source>
</evidence>
<evidence type="ECO:0000255" key="3">
    <source>
        <dbReference type="PROSITE-ProRule" id="PRU00108"/>
    </source>
</evidence>
<evidence type="ECO:0000256" key="4">
    <source>
        <dbReference type="SAM" id="MobiDB-lite"/>
    </source>
</evidence>
<evidence type="ECO:0000269" key="5">
    <source>
    </source>
</evidence>
<evidence type="ECO:0000303" key="6">
    <source>
    </source>
</evidence>
<evidence type="ECO:0000305" key="7"/>
<evidence type="ECO:0007829" key="8">
    <source>
        <dbReference type="PDB" id="1PUF"/>
    </source>
</evidence>
<dbReference type="EMBL" id="AB005457">
    <property type="protein sequence ID" value="BAA25800.1"/>
    <property type="molecule type" value="mRNA"/>
</dbReference>
<dbReference type="EMBL" id="AB005458">
    <property type="protein sequence ID" value="BAA25801.1"/>
    <property type="molecule type" value="mRNA"/>
</dbReference>
<dbReference type="EMBL" id="AB008914">
    <property type="protein sequence ID" value="BAA25802.1"/>
    <property type="molecule type" value="Genomic_DNA"/>
</dbReference>
<dbReference type="EMBL" id="BC055059">
    <property type="protein sequence ID" value="AAH55059.1"/>
    <property type="molecule type" value="mRNA"/>
</dbReference>
<dbReference type="EMBL" id="M28449">
    <property type="protein sequence ID" value="AAA78790.1"/>
    <property type="molecule type" value="mRNA"/>
</dbReference>
<dbReference type="CCDS" id="CCDS20146.1">
    <molecule id="P09631-1"/>
</dbReference>
<dbReference type="PIR" id="A31400">
    <property type="entry name" value="A31400"/>
</dbReference>
<dbReference type="PIR" id="JC6553">
    <property type="entry name" value="JC6553"/>
</dbReference>
<dbReference type="RefSeq" id="NP_034586.1">
    <molecule id="P09631-1"/>
    <property type="nucleotide sequence ID" value="NM_010456.4"/>
</dbReference>
<dbReference type="PDB" id="1PUF">
    <property type="method" value="X-ray"/>
    <property type="resolution" value="1.90 A"/>
    <property type="chains" value="A=193-269"/>
</dbReference>
<dbReference type="PDBsum" id="1PUF"/>
<dbReference type="SMR" id="P09631"/>
<dbReference type="BioGRID" id="200373">
    <property type="interactions" value="15"/>
</dbReference>
<dbReference type="CORUM" id="P09631"/>
<dbReference type="DIP" id="DIP-35619N"/>
<dbReference type="FunCoup" id="P09631">
    <property type="interactions" value="438"/>
</dbReference>
<dbReference type="IntAct" id="P09631">
    <property type="interactions" value="10"/>
</dbReference>
<dbReference type="MINT" id="P09631"/>
<dbReference type="STRING" id="10090.ENSMUSP00000046939"/>
<dbReference type="ChEMBL" id="CHEMBL4879429"/>
<dbReference type="GlyGen" id="P09631">
    <property type="glycosylation" value="1 site"/>
</dbReference>
<dbReference type="iPTMnet" id="P09631"/>
<dbReference type="PhosphoSitePlus" id="P09631"/>
<dbReference type="jPOST" id="P09631"/>
<dbReference type="PaxDb" id="10090-ENSMUSP00000046939"/>
<dbReference type="ProteomicsDB" id="266926">
    <molecule id="P09631-1"/>
</dbReference>
<dbReference type="ProteomicsDB" id="266927">
    <molecule id="P09631-2"/>
</dbReference>
<dbReference type="Antibodypedia" id="12395">
    <property type="antibodies" value="348 antibodies from 39 providers"/>
</dbReference>
<dbReference type="DNASU" id="15405"/>
<dbReference type="Ensembl" id="ENSMUST00000048680.8">
    <molecule id="P09631-1"/>
    <property type="protein sequence ID" value="ENSMUSP00000046939.6"/>
    <property type="gene ID" value="ENSMUSG00000038227.16"/>
</dbReference>
<dbReference type="Ensembl" id="ENSMUST00000114425.3">
    <molecule id="P09631-2"/>
    <property type="protein sequence ID" value="ENSMUSP00000110068.2"/>
    <property type="gene ID" value="ENSMUSG00000038227.16"/>
</dbReference>
<dbReference type="GeneID" id="15405"/>
<dbReference type="KEGG" id="mmu:15405"/>
<dbReference type="UCSC" id="uc009byl.2">
    <molecule id="P09631-1"/>
    <property type="organism name" value="mouse"/>
</dbReference>
<dbReference type="AGR" id="MGI:96180"/>
<dbReference type="CTD" id="3205"/>
<dbReference type="MGI" id="MGI:96180">
    <property type="gene designation" value="Hoxa9"/>
</dbReference>
<dbReference type="VEuPathDB" id="HostDB:ENSMUSG00000038227"/>
<dbReference type="eggNOG" id="KOG0487">
    <property type="taxonomic scope" value="Eukaryota"/>
</dbReference>
<dbReference type="GeneTree" id="ENSGT00940000161864"/>
<dbReference type="HOGENOM" id="CLU_071854_0_0_1"/>
<dbReference type="InParanoid" id="P09631"/>
<dbReference type="OMA" id="GEHPEFT"/>
<dbReference type="OrthoDB" id="6159439at2759"/>
<dbReference type="PhylomeDB" id="P09631"/>
<dbReference type="TreeFam" id="TF317819"/>
<dbReference type="BioGRID-ORCS" id="15405">
    <property type="hits" value="1 hit in 79 CRISPR screens"/>
</dbReference>
<dbReference type="ChiTaRS" id="Hoxa9">
    <property type="organism name" value="mouse"/>
</dbReference>
<dbReference type="EvolutionaryTrace" id="P09631"/>
<dbReference type="PRO" id="PR:P09631"/>
<dbReference type="Proteomes" id="UP000000589">
    <property type="component" value="Chromosome 6"/>
</dbReference>
<dbReference type="RNAct" id="P09631">
    <property type="molecule type" value="protein"/>
</dbReference>
<dbReference type="Bgee" id="ENSMUSG00000038227">
    <property type="expression patterns" value="Expressed in presomitic mesoderm and 148 other cell types or tissues"/>
</dbReference>
<dbReference type="GO" id="GO:0005737">
    <property type="term" value="C:cytoplasm"/>
    <property type="evidence" value="ECO:0000314"/>
    <property type="project" value="MGI"/>
</dbReference>
<dbReference type="GO" id="GO:0005654">
    <property type="term" value="C:nucleoplasm"/>
    <property type="evidence" value="ECO:0007669"/>
    <property type="project" value="Ensembl"/>
</dbReference>
<dbReference type="GO" id="GO:0005634">
    <property type="term" value="C:nucleus"/>
    <property type="evidence" value="ECO:0000314"/>
    <property type="project" value="MGI"/>
</dbReference>
<dbReference type="GO" id="GO:0005667">
    <property type="term" value="C:transcription regulator complex"/>
    <property type="evidence" value="ECO:0000314"/>
    <property type="project" value="MGI"/>
</dbReference>
<dbReference type="GO" id="GO:0001228">
    <property type="term" value="F:DNA-binding transcription activator activity, RNA polymerase II-specific"/>
    <property type="evidence" value="ECO:0000314"/>
    <property type="project" value="NTNU_SB"/>
</dbReference>
<dbReference type="GO" id="GO:0019899">
    <property type="term" value="F:enzyme binding"/>
    <property type="evidence" value="ECO:0007669"/>
    <property type="project" value="Ensembl"/>
</dbReference>
<dbReference type="GO" id="GO:0000978">
    <property type="term" value="F:RNA polymerase II cis-regulatory region sequence-specific DNA binding"/>
    <property type="evidence" value="ECO:0000315"/>
    <property type="project" value="NTNU_SB"/>
</dbReference>
<dbReference type="GO" id="GO:0009952">
    <property type="term" value="P:anterior/posterior pattern specification"/>
    <property type="evidence" value="ECO:0000315"/>
    <property type="project" value="MGI"/>
</dbReference>
<dbReference type="GO" id="GO:0060216">
    <property type="term" value="P:definitive hemopoiesis"/>
    <property type="evidence" value="ECO:0000316"/>
    <property type="project" value="MGI"/>
</dbReference>
<dbReference type="GO" id="GO:0006351">
    <property type="term" value="P:DNA-templated transcription"/>
    <property type="evidence" value="ECO:0007669"/>
    <property type="project" value="InterPro"/>
</dbReference>
<dbReference type="GO" id="GO:0035115">
    <property type="term" value="P:embryonic forelimb morphogenesis"/>
    <property type="evidence" value="ECO:0000316"/>
    <property type="project" value="MGI"/>
</dbReference>
<dbReference type="GO" id="GO:0048706">
    <property type="term" value="P:embryonic skeletal system development"/>
    <property type="evidence" value="ECO:0000315"/>
    <property type="project" value="MGI"/>
</dbReference>
<dbReference type="GO" id="GO:0042118">
    <property type="term" value="P:endothelial cell activation"/>
    <property type="evidence" value="ECO:0007669"/>
    <property type="project" value="Ensembl"/>
</dbReference>
<dbReference type="GO" id="GO:0008584">
    <property type="term" value="P:male gonad development"/>
    <property type="evidence" value="ECO:0000316"/>
    <property type="project" value="MGI"/>
</dbReference>
<dbReference type="GO" id="GO:0030879">
    <property type="term" value="P:mammary gland development"/>
    <property type="evidence" value="ECO:0000316"/>
    <property type="project" value="MGI"/>
</dbReference>
<dbReference type="GO" id="GO:0045638">
    <property type="term" value="P:negative regulation of myeloid cell differentiation"/>
    <property type="evidence" value="ECO:0000314"/>
    <property type="project" value="UniProtKB"/>
</dbReference>
<dbReference type="GO" id="GO:0045944">
    <property type="term" value="P:positive regulation of transcription by RNA polymerase II"/>
    <property type="evidence" value="ECO:0000314"/>
    <property type="project" value="NTNU_SB"/>
</dbReference>
<dbReference type="GO" id="GO:0009954">
    <property type="term" value="P:proximal/distal pattern formation"/>
    <property type="evidence" value="ECO:0000316"/>
    <property type="project" value="MGI"/>
</dbReference>
<dbReference type="GO" id="GO:0010468">
    <property type="term" value="P:regulation of gene expression"/>
    <property type="evidence" value="ECO:0000316"/>
    <property type="project" value="MGI"/>
</dbReference>
<dbReference type="GO" id="GO:0007338">
    <property type="term" value="P:single fertilization"/>
    <property type="evidence" value="ECO:0000316"/>
    <property type="project" value="MGI"/>
</dbReference>
<dbReference type="GO" id="GO:0007283">
    <property type="term" value="P:spermatogenesis"/>
    <property type="evidence" value="ECO:0000316"/>
    <property type="project" value="MGI"/>
</dbReference>
<dbReference type="GO" id="GO:0060065">
    <property type="term" value="P:uterus development"/>
    <property type="evidence" value="ECO:0000316"/>
    <property type="project" value="MGI"/>
</dbReference>
<dbReference type="CDD" id="cd00086">
    <property type="entry name" value="homeodomain"/>
    <property type="match status" value="1"/>
</dbReference>
<dbReference type="FunFam" id="1.10.10.60:FF:000018">
    <property type="entry name" value="Homeobox A10"/>
    <property type="match status" value="1"/>
</dbReference>
<dbReference type="Gene3D" id="1.10.10.60">
    <property type="entry name" value="Homeodomain-like"/>
    <property type="match status" value="1"/>
</dbReference>
<dbReference type="IDEAL" id="IID50023"/>
<dbReference type="InterPro" id="IPR050803">
    <property type="entry name" value="Abd-B_homeobox_TF"/>
</dbReference>
<dbReference type="InterPro" id="IPR001356">
    <property type="entry name" value="HD"/>
</dbReference>
<dbReference type="InterPro" id="IPR020479">
    <property type="entry name" value="HD_metazoa"/>
</dbReference>
<dbReference type="InterPro" id="IPR017970">
    <property type="entry name" value="Homeobox_CS"/>
</dbReference>
<dbReference type="InterPro" id="IPR009057">
    <property type="entry name" value="Homeodomain-like_sf"/>
</dbReference>
<dbReference type="InterPro" id="IPR006711">
    <property type="entry name" value="Hox9_activation_N"/>
</dbReference>
<dbReference type="InterPro" id="IPR017112">
    <property type="entry name" value="HXA9/HXB9/HXC9"/>
</dbReference>
<dbReference type="PANTHER" id="PTHR45970">
    <property type="entry name" value="AGAP004664-PA"/>
    <property type="match status" value="1"/>
</dbReference>
<dbReference type="PANTHER" id="PTHR45970:SF3">
    <property type="entry name" value="HOMEOBOX PROTEIN HOX-A9"/>
    <property type="match status" value="1"/>
</dbReference>
<dbReference type="Pfam" id="PF00046">
    <property type="entry name" value="Homeodomain"/>
    <property type="match status" value="1"/>
</dbReference>
<dbReference type="Pfam" id="PF04617">
    <property type="entry name" value="Hox9_act"/>
    <property type="match status" value="1"/>
</dbReference>
<dbReference type="PIRSF" id="PIRSF037109">
    <property type="entry name" value="Homeobox_Hox9"/>
    <property type="match status" value="1"/>
</dbReference>
<dbReference type="PRINTS" id="PR00024">
    <property type="entry name" value="HOMEOBOX"/>
</dbReference>
<dbReference type="SMART" id="SM00389">
    <property type="entry name" value="HOX"/>
    <property type="match status" value="1"/>
</dbReference>
<dbReference type="SUPFAM" id="SSF46689">
    <property type="entry name" value="Homeodomain-like"/>
    <property type="match status" value="1"/>
</dbReference>
<dbReference type="PROSITE" id="PS00027">
    <property type="entry name" value="HOMEOBOX_1"/>
    <property type="match status" value="1"/>
</dbReference>
<dbReference type="PROSITE" id="PS50071">
    <property type="entry name" value="HOMEOBOX_2"/>
    <property type="match status" value="1"/>
</dbReference>
<keyword id="KW-0002">3D-structure</keyword>
<keyword id="KW-0025">Alternative splicing</keyword>
<keyword id="KW-0963">Cytoplasm</keyword>
<keyword id="KW-0217">Developmental protein</keyword>
<keyword id="KW-0238">DNA-binding</keyword>
<keyword id="KW-0371">Homeobox</keyword>
<keyword id="KW-0488">Methylation</keyword>
<keyword id="KW-0539">Nucleus</keyword>
<keyword id="KW-1185">Reference proteome</keyword>
<keyword id="KW-0804">Transcription</keyword>
<keyword id="KW-0805">Transcription regulation</keyword>
<accession>P09631</accession>
<accession>O70154</accession>
<accession>O70155</accession>
<feature type="chain" id="PRO_0000200082" description="Homeobox protein Hox-A9">
    <location>
        <begin position="1"/>
        <end position="271"/>
    </location>
</feature>
<feature type="DNA-binding region" description="Homeobox" evidence="3">
    <location>
        <begin position="205"/>
        <end position="264"/>
    </location>
</feature>
<feature type="region of interest" description="Disordered" evidence="4">
    <location>
        <begin position="154"/>
        <end position="197"/>
    </location>
</feature>
<feature type="modified residue" description="Symmetric dimethylarginine" evidence="2">
    <location>
        <position position="139"/>
    </location>
</feature>
<feature type="splice variant" id="VSP_002382" description="In isoform HoxA-9T." evidence="6">
    <original>R</original>
    <variation>S</variation>
    <location>
        <position position="105"/>
    </location>
</feature>
<feature type="splice variant" id="VSP_002383" description="In isoform HoxA-9T." evidence="6">
    <location>
        <begin position="106"/>
        <end position="271"/>
    </location>
</feature>
<feature type="mutagenesis site" description="Significant reduction in interaction with EIF4E." evidence="5">
    <original>Y</original>
    <variation>A</variation>
    <location>
        <position position="11"/>
    </location>
</feature>
<feature type="turn" evidence="8">
    <location>
        <begin position="195"/>
        <end position="198"/>
    </location>
</feature>
<feature type="helix" evidence="8">
    <location>
        <begin position="214"/>
        <end position="226"/>
    </location>
</feature>
<feature type="helix" evidence="8">
    <location>
        <begin position="232"/>
        <end position="242"/>
    </location>
</feature>
<feature type="helix" evidence="8">
    <location>
        <begin position="246"/>
        <end position="267"/>
    </location>
</feature>
<comment type="function">
    <text evidence="2 5">Sequence-specific transcription factor which is part of a developmental regulatory system that provides cells with specific positional identities on the anterior-posterior axis. Required for induction of SELE/E-selectin and VCAM1 on the endothelial cell surface at sites of inflammation (By similarity). Positively regulates EIF4E-mediated mRNA nuclear export and also increases the translation efficiency of ODC mRNA in the cytoplasm by competing with factors which repress EIF4E activity such as PRH (PubMed:15657436).</text>
</comment>
<comment type="subunit">
    <text evidence="2 5">Transiently interacts with PRMT5 in TNF-alpha stimulated endothelial cells (By similarity). Interacts with EIF4E (PubMed:15657436).</text>
</comment>
<comment type="interaction">
    <interactant intactId="EBI-925334">
        <id>P09631</id>
    </interactant>
    <interactant intactId="EBI-444966">
        <id>Q9Z148</id>
        <label>Ehmt2</label>
    </interactant>
    <organismsDiffer>false</organismsDiffer>
    <experiments>2</experiments>
</comment>
<comment type="interaction">
    <interactant intactId="EBI-925334">
        <id>P09631</id>
    </interactant>
    <interactant intactId="EBI-6996259">
        <id>P41778</id>
        <label>Pbx1</label>
    </interactant>
    <organismsDiffer>false</organismsDiffer>
    <experiments>2</experiments>
</comment>
<comment type="subcellular location">
    <subcellularLocation>
        <location evidence="2">Nucleus</location>
    </subcellularLocation>
    <subcellularLocation>
        <location evidence="2">Cytoplasm</location>
    </subcellularLocation>
</comment>
<comment type="alternative products">
    <event type="alternative splicing"/>
    <isoform>
        <id>P09631-1</id>
        <name>HoxA-9</name>
        <sequence type="displayed"/>
    </isoform>
    <isoform>
        <id>P09631-2</id>
        <name>HoxA-9T</name>
        <sequence type="described" ref="VSP_002382 VSP_002383"/>
    </isoform>
</comment>
<comment type="tissue specificity">
    <text>Expressed in high level in the embryonic and adult spinal cord with a preference in the posterior region.</text>
</comment>
<comment type="PTM">
    <text evidence="1">Methylated on Arg-140 by PRMT5; methylation is critical for E-selectin induction.</text>
</comment>
<comment type="similarity">
    <text evidence="7">Belongs to the Abd-B homeobox family.</text>
</comment>
<sequence length="271" mass="29917">MATTGALGNYYVDSFLLGADAADELGAGRYAPGTLGQPPRQAAALAEHPDFSPCSFQSKAAVFGASWNPVHAAGANAVPAAVYHHHHHPYVHPQAPVAAAAPDGRYMRSWLEPTPGALSFAGLPSSRPYGIKPEPLSARRGDCPTLDTHTLSLTDYACGSPPVDREKQPSEGAFSENNAENESGGDKPPIDPNNPAANWLHARSTRKKRCPYTKHQTLELEKEFLFNMYLTRDRRYEVARLLNLTERQVKIWFQNRRMKMKKINKDRAKDE</sequence>
<organism>
    <name type="scientific">Mus musculus</name>
    <name type="common">Mouse</name>
    <dbReference type="NCBI Taxonomy" id="10090"/>
    <lineage>
        <taxon>Eukaryota</taxon>
        <taxon>Metazoa</taxon>
        <taxon>Chordata</taxon>
        <taxon>Craniata</taxon>
        <taxon>Vertebrata</taxon>
        <taxon>Euteleostomi</taxon>
        <taxon>Mammalia</taxon>
        <taxon>Eutheria</taxon>
        <taxon>Euarchontoglires</taxon>
        <taxon>Glires</taxon>
        <taxon>Rodentia</taxon>
        <taxon>Myomorpha</taxon>
        <taxon>Muroidea</taxon>
        <taxon>Muridae</taxon>
        <taxon>Murinae</taxon>
        <taxon>Mus</taxon>
        <taxon>Mus</taxon>
    </lineage>
</organism>
<gene>
    <name type="primary">Hoxa9</name>
    <name type="synonym">Hox-1.7</name>
    <name type="synonym">Hoxa-9</name>
</gene>
<proteinExistence type="evidence at protein level"/>